<organism>
    <name type="scientific">Neisseria meningitidis serogroup C (strain 053442)</name>
    <dbReference type="NCBI Taxonomy" id="374833"/>
    <lineage>
        <taxon>Bacteria</taxon>
        <taxon>Pseudomonadati</taxon>
        <taxon>Pseudomonadota</taxon>
        <taxon>Betaproteobacteria</taxon>
        <taxon>Neisseriales</taxon>
        <taxon>Neisseriaceae</taxon>
        <taxon>Neisseria</taxon>
    </lineage>
</organism>
<comment type="function">
    <text evidence="1">Protein S19 forms a complex with S13 that binds strongly to the 16S ribosomal RNA.</text>
</comment>
<comment type="similarity">
    <text evidence="1">Belongs to the universal ribosomal protein uS19 family.</text>
</comment>
<keyword id="KW-0687">Ribonucleoprotein</keyword>
<keyword id="KW-0689">Ribosomal protein</keyword>
<keyword id="KW-0694">RNA-binding</keyword>
<keyword id="KW-0699">rRNA-binding</keyword>
<gene>
    <name evidence="1" type="primary">rpsS</name>
    <name type="ordered locus">NMCC_2001</name>
</gene>
<protein>
    <recommendedName>
        <fullName evidence="1">Small ribosomal subunit protein uS19</fullName>
    </recommendedName>
    <alternativeName>
        <fullName evidence="2">30S ribosomal protein S19</fullName>
    </alternativeName>
</protein>
<name>RS19_NEIM0</name>
<accession>A9M3W2</accession>
<evidence type="ECO:0000255" key="1">
    <source>
        <dbReference type="HAMAP-Rule" id="MF_00531"/>
    </source>
</evidence>
<evidence type="ECO:0000305" key="2"/>
<dbReference type="EMBL" id="CP000381">
    <property type="protein sequence ID" value="ABX74124.1"/>
    <property type="molecule type" value="Genomic_DNA"/>
</dbReference>
<dbReference type="RefSeq" id="WP_002215422.1">
    <property type="nucleotide sequence ID" value="NC_010120.1"/>
</dbReference>
<dbReference type="SMR" id="A9M3W2"/>
<dbReference type="GeneID" id="93387221"/>
<dbReference type="KEGG" id="nmn:NMCC_2001"/>
<dbReference type="HOGENOM" id="CLU_144911_0_1_4"/>
<dbReference type="Proteomes" id="UP000001177">
    <property type="component" value="Chromosome"/>
</dbReference>
<dbReference type="GO" id="GO:0005737">
    <property type="term" value="C:cytoplasm"/>
    <property type="evidence" value="ECO:0007669"/>
    <property type="project" value="UniProtKB-ARBA"/>
</dbReference>
<dbReference type="GO" id="GO:0015935">
    <property type="term" value="C:small ribosomal subunit"/>
    <property type="evidence" value="ECO:0007669"/>
    <property type="project" value="InterPro"/>
</dbReference>
<dbReference type="GO" id="GO:0019843">
    <property type="term" value="F:rRNA binding"/>
    <property type="evidence" value="ECO:0007669"/>
    <property type="project" value="UniProtKB-UniRule"/>
</dbReference>
<dbReference type="GO" id="GO:0003735">
    <property type="term" value="F:structural constituent of ribosome"/>
    <property type="evidence" value="ECO:0007669"/>
    <property type="project" value="InterPro"/>
</dbReference>
<dbReference type="GO" id="GO:0000028">
    <property type="term" value="P:ribosomal small subunit assembly"/>
    <property type="evidence" value="ECO:0007669"/>
    <property type="project" value="TreeGrafter"/>
</dbReference>
<dbReference type="GO" id="GO:0006412">
    <property type="term" value="P:translation"/>
    <property type="evidence" value="ECO:0007669"/>
    <property type="project" value="UniProtKB-UniRule"/>
</dbReference>
<dbReference type="FunFam" id="3.30.860.10:FF:000001">
    <property type="entry name" value="30S ribosomal protein S19"/>
    <property type="match status" value="1"/>
</dbReference>
<dbReference type="Gene3D" id="3.30.860.10">
    <property type="entry name" value="30s Ribosomal Protein S19, Chain A"/>
    <property type="match status" value="1"/>
</dbReference>
<dbReference type="HAMAP" id="MF_00531">
    <property type="entry name" value="Ribosomal_uS19"/>
    <property type="match status" value="1"/>
</dbReference>
<dbReference type="InterPro" id="IPR002222">
    <property type="entry name" value="Ribosomal_uS19"/>
</dbReference>
<dbReference type="InterPro" id="IPR005732">
    <property type="entry name" value="Ribosomal_uS19_bac-type"/>
</dbReference>
<dbReference type="InterPro" id="IPR020934">
    <property type="entry name" value="Ribosomal_uS19_CS"/>
</dbReference>
<dbReference type="InterPro" id="IPR023575">
    <property type="entry name" value="Ribosomal_uS19_SF"/>
</dbReference>
<dbReference type="NCBIfam" id="TIGR01050">
    <property type="entry name" value="rpsS_bact"/>
    <property type="match status" value="1"/>
</dbReference>
<dbReference type="PANTHER" id="PTHR11880">
    <property type="entry name" value="RIBOSOMAL PROTEIN S19P FAMILY MEMBER"/>
    <property type="match status" value="1"/>
</dbReference>
<dbReference type="PANTHER" id="PTHR11880:SF8">
    <property type="entry name" value="SMALL RIBOSOMAL SUBUNIT PROTEIN US19M"/>
    <property type="match status" value="1"/>
</dbReference>
<dbReference type="Pfam" id="PF00203">
    <property type="entry name" value="Ribosomal_S19"/>
    <property type="match status" value="1"/>
</dbReference>
<dbReference type="PIRSF" id="PIRSF002144">
    <property type="entry name" value="Ribosomal_S19"/>
    <property type="match status" value="1"/>
</dbReference>
<dbReference type="PRINTS" id="PR00975">
    <property type="entry name" value="RIBOSOMALS19"/>
</dbReference>
<dbReference type="SUPFAM" id="SSF54570">
    <property type="entry name" value="Ribosomal protein S19"/>
    <property type="match status" value="1"/>
</dbReference>
<dbReference type="PROSITE" id="PS00323">
    <property type="entry name" value="RIBOSOMAL_S19"/>
    <property type="match status" value="1"/>
</dbReference>
<sequence>MARSLKKGPYVDLHLLKKVDAARASNDKRPIKTWSRRSTILPDFIGLTIAVHNGRTHVPVFISDNMVGHKLGEFSLTRTFKGHLADKKAKKK</sequence>
<proteinExistence type="inferred from homology"/>
<reference key="1">
    <citation type="journal article" date="2008" name="Genomics">
        <title>Characterization of ST-4821 complex, a unique Neisseria meningitidis clone.</title>
        <authorList>
            <person name="Peng J."/>
            <person name="Yang L."/>
            <person name="Yang F."/>
            <person name="Yang J."/>
            <person name="Yan Y."/>
            <person name="Nie H."/>
            <person name="Zhang X."/>
            <person name="Xiong Z."/>
            <person name="Jiang Y."/>
            <person name="Cheng F."/>
            <person name="Xu X."/>
            <person name="Chen S."/>
            <person name="Sun L."/>
            <person name="Li W."/>
            <person name="Shen Y."/>
            <person name="Shao Z."/>
            <person name="Liang X."/>
            <person name="Xu J."/>
            <person name="Jin Q."/>
        </authorList>
    </citation>
    <scope>NUCLEOTIDE SEQUENCE [LARGE SCALE GENOMIC DNA]</scope>
    <source>
        <strain>053442</strain>
    </source>
</reference>
<feature type="chain" id="PRO_1000081780" description="Small ribosomal subunit protein uS19">
    <location>
        <begin position="1"/>
        <end position="92"/>
    </location>
</feature>